<sequence length="223" mass="24790">MDLASLRAQQIELASSVCREDRLDKDPPAFIGGADVGFEQGGEVTRAAMVLLKYPSLELVEYKVARIATTMPYIPGFLSFREYPALLAAWEQLSQKPDLLFVDGHGISHPRRLGVASHFGLLVDVPTIGVAKKRLCGKFEPLSTEPGALSPLMDKGEQLAWVWRSKARCNPLFIATGHRVSTDSALAWVQRCMKGYRLPEPTRWADAVASGRPAFIRWQEIQR</sequence>
<accession>B4TQK8</accession>
<protein>
    <recommendedName>
        <fullName evidence="1">Endonuclease V</fullName>
        <ecNumber evidence="1">3.1.21.7</ecNumber>
    </recommendedName>
    <alternativeName>
        <fullName evidence="1">Deoxyinosine 3'endonuclease</fullName>
    </alternativeName>
    <alternativeName>
        <fullName evidence="1">Deoxyribonuclease V</fullName>
        <shortName evidence="1">DNase V</shortName>
    </alternativeName>
</protein>
<comment type="function">
    <text evidence="1">DNA repair enzyme involved in the repair of deaminated bases. Selectively cleaves double-stranded DNA at the second phosphodiester bond 3' to a deoxyinosine leaving behind the intact lesion on the nicked DNA.</text>
</comment>
<comment type="catalytic activity">
    <reaction evidence="1">
        <text>Endonucleolytic cleavage at apurinic or apyrimidinic sites to products with a 5'-phosphate.</text>
        <dbReference type="EC" id="3.1.21.7"/>
    </reaction>
</comment>
<comment type="cofactor">
    <cofactor evidence="1">
        <name>Mg(2+)</name>
        <dbReference type="ChEBI" id="CHEBI:18420"/>
    </cofactor>
</comment>
<comment type="subcellular location">
    <subcellularLocation>
        <location evidence="1">Cytoplasm</location>
    </subcellularLocation>
</comment>
<comment type="similarity">
    <text evidence="1">Belongs to the endonuclease V family.</text>
</comment>
<reference key="1">
    <citation type="journal article" date="2011" name="J. Bacteriol.">
        <title>Comparative genomics of 28 Salmonella enterica isolates: evidence for CRISPR-mediated adaptive sublineage evolution.</title>
        <authorList>
            <person name="Fricke W.F."/>
            <person name="Mammel M.K."/>
            <person name="McDermott P.F."/>
            <person name="Tartera C."/>
            <person name="White D.G."/>
            <person name="Leclerc J.E."/>
            <person name="Ravel J."/>
            <person name="Cebula T.A."/>
        </authorList>
    </citation>
    <scope>NUCLEOTIDE SEQUENCE [LARGE SCALE GENOMIC DNA]</scope>
    <source>
        <strain>CVM19633</strain>
    </source>
</reference>
<organism>
    <name type="scientific">Salmonella schwarzengrund (strain CVM19633)</name>
    <dbReference type="NCBI Taxonomy" id="439843"/>
    <lineage>
        <taxon>Bacteria</taxon>
        <taxon>Pseudomonadati</taxon>
        <taxon>Pseudomonadota</taxon>
        <taxon>Gammaproteobacteria</taxon>
        <taxon>Enterobacterales</taxon>
        <taxon>Enterobacteriaceae</taxon>
        <taxon>Salmonella</taxon>
    </lineage>
</organism>
<feature type="chain" id="PRO_1000133890" description="Endonuclease V">
    <location>
        <begin position="1"/>
        <end position="223"/>
    </location>
</feature>
<feature type="binding site" evidence="1">
    <location>
        <position position="35"/>
    </location>
    <ligand>
        <name>Mg(2+)</name>
        <dbReference type="ChEBI" id="CHEBI:18420"/>
    </ligand>
</feature>
<feature type="binding site" evidence="1">
    <location>
        <position position="103"/>
    </location>
    <ligand>
        <name>Mg(2+)</name>
        <dbReference type="ChEBI" id="CHEBI:18420"/>
    </ligand>
</feature>
<feature type="site" description="Interaction with target DNA" evidence="1">
    <location>
        <position position="73"/>
    </location>
</feature>
<dbReference type="EC" id="3.1.21.7" evidence="1"/>
<dbReference type="EMBL" id="CP001127">
    <property type="protein sequence ID" value="ACF89756.1"/>
    <property type="molecule type" value="Genomic_DNA"/>
</dbReference>
<dbReference type="RefSeq" id="WP_000362362.1">
    <property type="nucleotide sequence ID" value="NC_011094.1"/>
</dbReference>
<dbReference type="SMR" id="B4TQK8"/>
<dbReference type="KEGG" id="sew:SeSA_A4379"/>
<dbReference type="HOGENOM" id="CLU_047631_1_0_6"/>
<dbReference type="Proteomes" id="UP000001865">
    <property type="component" value="Chromosome"/>
</dbReference>
<dbReference type="GO" id="GO:0005737">
    <property type="term" value="C:cytoplasm"/>
    <property type="evidence" value="ECO:0007669"/>
    <property type="project" value="UniProtKB-SubCell"/>
</dbReference>
<dbReference type="GO" id="GO:0043737">
    <property type="term" value="F:deoxyribonuclease V activity"/>
    <property type="evidence" value="ECO:0007669"/>
    <property type="project" value="UniProtKB-UniRule"/>
</dbReference>
<dbReference type="GO" id="GO:0000287">
    <property type="term" value="F:magnesium ion binding"/>
    <property type="evidence" value="ECO:0007669"/>
    <property type="project" value="UniProtKB-UniRule"/>
</dbReference>
<dbReference type="GO" id="GO:0016891">
    <property type="term" value="F:RNA endonuclease activity, producing 5'-phosphomonoesters"/>
    <property type="evidence" value="ECO:0007669"/>
    <property type="project" value="TreeGrafter"/>
</dbReference>
<dbReference type="GO" id="GO:0003727">
    <property type="term" value="F:single-stranded RNA binding"/>
    <property type="evidence" value="ECO:0007669"/>
    <property type="project" value="TreeGrafter"/>
</dbReference>
<dbReference type="GO" id="GO:0006281">
    <property type="term" value="P:DNA repair"/>
    <property type="evidence" value="ECO:0007669"/>
    <property type="project" value="UniProtKB-UniRule"/>
</dbReference>
<dbReference type="CDD" id="cd06559">
    <property type="entry name" value="Endonuclease_V"/>
    <property type="match status" value="1"/>
</dbReference>
<dbReference type="FunFam" id="3.30.2170.10:FF:000001">
    <property type="entry name" value="Endonuclease V"/>
    <property type="match status" value="1"/>
</dbReference>
<dbReference type="Gene3D" id="3.30.2170.10">
    <property type="entry name" value="archaeoglobus fulgidus dsm 4304 superfamily"/>
    <property type="match status" value="1"/>
</dbReference>
<dbReference type="HAMAP" id="MF_00801">
    <property type="entry name" value="Endonuclease_5"/>
    <property type="match status" value="1"/>
</dbReference>
<dbReference type="InterPro" id="IPR007581">
    <property type="entry name" value="Endonuclease-V"/>
</dbReference>
<dbReference type="NCBIfam" id="NF008629">
    <property type="entry name" value="PRK11617.1"/>
    <property type="match status" value="1"/>
</dbReference>
<dbReference type="PANTHER" id="PTHR28511">
    <property type="entry name" value="ENDONUCLEASE V"/>
    <property type="match status" value="1"/>
</dbReference>
<dbReference type="PANTHER" id="PTHR28511:SF1">
    <property type="entry name" value="ENDONUCLEASE V"/>
    <property type="match status" value="1"/>
</dbReference>
<dbReference type="Pfam" id="PF04493">
    <property type="entry name" value="Endonuclease_5"/>
    <property type="match status" value="1"/>
</dbReference>
<gene>
    <name evidence="1" type="primary">nfi</name>
    <name type="ordered locus">SeSA_A4379</name>
</gene>
<keyword id="KW-0963">Cytoplasm</keyword>
<keyword id="KW-0227">DNA damage</keyword>
<keyword id="KW-0234">DNA repair</keyword>
<keyword id="KW-0255">Endonuclease</keyword>
<keyword id="KW-0378">Hydrolase</keyword>
<keyword id="KW-0460">Magnesium</keyword>
<keyword id="KW-0479">Metal-binding</keyword>
<keyword id="KW-0540">Nuclease</keyword>
<proteinExistence type="inferred from homology"/>
<name>NFI_SALSV</name>
<evidence type="ECO:0000255" key="1">
    <source>
        <dbReference type="HAMAP-Rule" id="MF_00801"/>
    </source>
</evidence>